<protein>
    <recommendedName>
        <fullName evidence="1">Ribulose-phosphate 3-epimerase</fullName>
        <ecNumber evidence="1">5.1.3.1</ecNumber>
    </recommendedName>
</protein>
<keyword id="KW-0119">Carbohydrate metabolism</keyword>
<keyword id="KW-0413">Isomerase</keyword>
<keyword id="KW-0479">Metal-binding</keyword>
<keyword id="KW-1185">Reference proteome</keyword>
<reference key="1">
    <citation type="journal article" date="2002" name="Proc. Natl. Acad. Sci. U.S.A.">
        <title>Extensive mosaic structure revealed by the complete genome sequence of uropathogenic Escherichia coli.</title>
        <authorList>
            <person name="Welch R.A."/>
            <person name="Burland V."/>
            <person name="Plunkett G. III"/>
            <person name="Redford P."/>
            <person name="Roesch P."/>
            <person name="Rasko D."/>
            <person name="Buckles E.L."/>
            <person name="Liou S.-R."/>
            <person name="Boutin A."/>
            <person name="Hackett J."/>
            <person name="Stroud D."/>
            <person name="Mayhew G.F."/>
            <person name="Rose D.J."/>
            <person name="Zhou S."/>
            <person name="Schwartz D.C."/>
            <person name="Perna N.T."/>
            <person name="Mobley H.L.T."/>
            <person name="Donnenberg M.S."/>
            <person name="Blattner F.R."/>
        </authorList>
    </citation>
    <scope>NUCLEOTIDE SEQUENCE [LARGE SCALE GENOMIC DNA]</scope>
    <source>
        <strain>CFT073 / ATCC 700928 / UPEC</strain>
    </source>
</reference>
<comment type="function">
    <text evidence="1">Catalyzes the reversible epimerization of D-ribulose 5-phosphate to D-xylulose 5-phosphate.</text>
</comment>
<comment type="catalytic activity">
    <reaction evidence="1">
        <text>D-ribulose 5-phosphate = D-xylulose 5-phosphate</text>
        <dbReference type="Rhea" id="RHEA:13677"/>
        <dbReference type="ChEBI" id="CHEBI:57737"/>
        <dbReference type="ChEBI" id="CHEBI:58121"/>
        <dbReference type="EC" id="5.1.3.1"/>
    </reaction>
</comment>
<comment type="cofactor">
    <cofactor evidence="1">
        <name>a divalent metal cation</name>
        <dbReference type="ChEBI" id="CHEBI:60240"/>
    </cofactor>
    <text evidence="1">Binds 1 divalent metal cation per subunit.</text>
</comment>
<comment type="pathway">
    <text evidence="1">Carbohydrate degradation.</text>
</comment>
<comment type="similarity">
    <text evidence="1">Belongs to the ribulose-phosphate 3-epimerase family.</text>
</comment>
<gene>
    <name evidence="1" type="primary">rpe</name>
    <name type="ordered locus">c4156</name>
</gene>
<feature type="chain" id="PRO_0000171570" description="Ribulose-phosphate 3-epimerase">
    <location>
        <begin position="1"/>
        <end position="225"/>
    </location>
</feature>
<feature type="active site" description="Proton acceptor" evidence="1">
    <location>
        <position position="36"/>
    </location>
</feature>
<feature type="active site" description="Proton donor" evidence="1">
    <location>
        <position position="177"/>
    </location>
</feature>
<feature type="binding site" evidence="1">
    <location>
        <position position="9"/>
    </location>
    <ligand>
        <name>substrate</name>
    </ligand>
</feature>
<feature type="binding site" evidence="1">
    <location>
        <position position="34"/>
    </location>
    <ligand>
        <name>a divalent metal cation</name>
        <dbReference type="ChEBI" id="CHEBI:60240"/>
    </ligand>
</feature>
<feature type="binding site" evidence="1">
    <location>
        <position position="36"/>
    </location>
    <ligand>
        <name>a divalent metal cation</name>
        <dbReference type="ChEBI" id="CHEBI:60240"/>
    </ligand>
</feature>
<feature type="binding site" evidence="1">
    <location>
        <position position="68"/>
    </location>
    <ligand>
        <name>a divalent metal cation</name>
        <dbReference type="ChEBI" id="CHEBI:60240"/>
    </ligand>
</feature>
<feature type="binding site" evidence="1">
    <location>
        <position position="68"/>
    </location>
    <ligand>
        <name>substrate</name>
    </ligand>
</feature>
<feature type="binding site" evidence="1">
    <location>
        <begin position="144"/>
        <end position="147"/>
    </location>
    <ligand>
        <name>substrate</name>
    </ligand>
</feature>
<feature type="binding site" evidence="1">
    <location>
        <begin position="177"/>
        <end position="179"/>
    </location>
    <ligand>
        <name>substrate</name>
    </ligand>
</feature>
<feature type="binding site" evidence="1">
    <location>
        <position position="177"/>
    </location>
    <ligand>
        <name>a divalent metal cation</name>
        <dbReference type="ChEBI" id="CHEBI:60240"/>
    </ligand>
</feature>
<feature type="binding site" evidence="1">
    <location>
        <begin position="199"/>
        <end position="200"/>
    </location>
    <ligand>
        <name>substrate</name>
    </ligand>
</feature>
<name>RPE_ECOL6</name>
<evidence type="ECO:0000255" key="1">
    <source>
        <dbReference type="HAMAP-Rule" id="MF_02227"/>
    </source>
</evidence>
<accession>P0AG08</accession>
<accession>P32661</accession>
<sequence length="225" mass="24554">MKQYLIAPSILSADFARLGEDTAKALAAGADVVHFDVMDNHYVPNLTIGPMVLKSLRNYGITAPIDVHLMVKPVDRIVPDFAAAGASIITFHPEASEHVDRTLQLIKENGCKAGLVFNPATPLSYLDYVMDKLDVILLMSVNPGFGGQSFIPQTLDKLREVRRRIDESGFDIRLEVDGGVKVNNIGEIAAAGADMFVAGSAIFDQPDYKKVIDEMRSELAKVSHE</sequence>
<organism>
    <name type="scientific">Escherichia coli O6:H1 (strain CFT073 / ATCC 700928 / UPEC)</name>
    <dbReference type="NCBI Taxonomy" id="199310"/>
    <lineage>
        <taxon>Bacteria</taxon>
        <taxon>Pseudomonadati</taxon>
        <taxon>Pseudomonadota</taxon>
        <taxon>Gammaproteobacteria</taxon>
        <taxon>Enterobacterales</taxon>
        <taxon>Enterobacteriaceae</taxon>
        <taxon>Escherichia</taxon>
    </lineage>
</organism>
<proteinExistence type="inferred from homology"/>
<dbReference type="EC" id="5.1.3.1" evidence="1"/>
<dbReference type="EMBL" id="AE014075">
    <property type="protein sequence ID" value="AAN82594.1"/>
    <property type="molecule type" value="Genomic_DNA"/>
</dbReference>
<dbReference type="RefSeq" id="WP_000816280.1">
    <property type="nucleotide sequence ID" value="NZ_CP051263.1"/>
</dbReference>
<dbReference type="SMR" id="P0AG08"/>
<dbReference type="STRING" id="199310.c4156"/>
<dbReference type="GeneID" id="93778612"/>
<dbReference type="KEGG" id="ecc:c4156"/>
<dbReference type="eggNOG" id="COG0036">
    <property type="taxonomic scope" value="Bacteria"/>
</dbReference>
<dbReference type="HOGENOM" id="CLU_054856_2_1_6"/>
<dbReference type="BioCyc" id="ECOL199310:C4156-MONOMER"/>
<dbReference type="Proteomes" id="UP000001410">
    <property type="component" value="Chromosome"/>
</dbReference>
<dbReference type="GO" id="GO:0004750">
    <property type="term" value="F:D-ribulose-phosphate 3-epimerase activity"/>
    <property type="evidence" value="ECO:0007669"/>
    <property type="project" value="UniProtKB-UniRule"/>
</dbReference>
<dbReference type="GO" id="GO:0046872">
    <property type="term" value="F:metal ion binding"/>
    <property type="evidence" value="ECO:0007669"/>
    <property type="project" value="UniProtKB-UniRule"/>
</dbReference>
<dbReference type="GO" id="GO:0019323">
    <property type="term" value="P:pentose catabolic process"/>
    <property type="evidence" value="ECO:0007669"/>
    <property type="project" value="UniProtKB-UniRule"/>
</dbReference>
<dbReference type="GO" id="GO:0006098">
    <property type="term" value="P:pentose-phosphate shunt"/>
    <property type="evidence" value="ECO:0007669"/>
    <property type="project" value="InterPro"/>
</dbReference>
<dbReference type="CDD" id="cd00429">
    <property type="entry name" value="RPE"/>
    <property type="match status" value="1"/>
</dbReference>
<dbReference type="FunFam" id="3.20.20.70:FF:000004">
    <property type="entry name" value="Ribulose-phosphate 3-epimerase"/>
    <property type="match status" value="1"/>
</dbReference>
<dbReference type="Gene3D" id="3.20.20.70">
    <property type="entry name" value="Aldolase class I"/>
    <property type="match status" value="1"/>
</dbReference>
<dbReference type="HAMAP" id="MF_02227">
    <property type="entry name" value="RPE"/>
    <property type="match status" value="1"/>
</dbReference>
<dbReference type="InterPro" id="IPR013785">
    <property type="entry name" value="Aldolase_TIM"/>
</dbReference>
<dbReference type="InterPro" id="IPR026019">
    <property type="entry name" value="Ribul_P_3_epim"/>
</dbReference>
<dbReference type="InterPro" id="IPR000056">
    <property type="entry name" value="Ribul_P_3_epim-like"/>
</dbReference>
<dbReference type="InterPro" id="IPR011060">
    <property type="entry name" value="RibuloseP-bd_barrel"/>
</dbReference>
<dbReference type="NCBIfam" id="NF004076">
    <property type="entry name" value="PRK05581.1-4"/>
    <property type="match status" value="1"/>
</dbReference>
<dbReference type="NCBIfam" id="TIGR01163">
    <property type="entry name" value="rpe"/>
    <property type="match status" value="1"/>
</dbReference>
<dbReference type="PANTHER" id="PTHR11749">
    <property type="entry name" value="RIBULOSE-5-PHOSPHATE-3-EPIMERASE"/>
    <property type="match status" value="1"/>
</dbReference>
<dbReference type="Pfam" id="PF00834">
    <property type="entry name" value="Ribul_P_3_epim"/>
    <property type="match status" value="1"/>
</dbReference>
<dbReference type="PIRSF" id="PIRSF001461">
    <property type="entry name" value="RPE"/>
    <property type="match status" value="1"/>
</dbReference>
<dbReference type="SUPFAM" id="SSF51366">
    <property type="entry name" value="Ribulose-phoshate binding barrel"/>
    <property type="match status" value="1"/>
</dbReference>
<dbReference type="PROSITE" id="PS01085">
    <property type="entry name" value="RIBUL_P_3_EPIMER_1"/>
    <property type="match status" value="1"/>
</dbReference>
<dbReference type="PROSITE" id="PS01086">
    <property type="entry name" value="RIBUL_P_3_EPIMER_2"/>
    <property type="match status" value="1"/>
</dbReference>